<proteinExistence type="inferred from homology"/>
<accession>Q74ER9</accession>
<protein>
    <recommendedName>
        <fullName evidence="1">DNA ligase</fullName>
        <ecNumber evidence="1">6.5.1.2</ecNumber>
    </recommendedName>
    <alternativeName>
        <fullName evidence="1">Polydeoxyribonucleotide synthase [NAD(+)]</fullName>
    </alternativeName>
</protein>
<keyword id="KW-0227">DNA damage</keyword>
<keyword id="KW-0234">DNA repair</keyword>
<keyword id="KW-0235">DNA replication</keyword>
<keyword id="KW-0436">Ligase</keyword>
<keyword id="KW-0460">Magnesium</keyword>
<keyword id="KW-0464">Manganese</keyword>
<keyword id="KW-0479">Metal-binding</keyword>
<keyword id="KW-0520">NAD</keyword>
<keyword id="KW-1185">Reference proteome</keyword>
<keyword id="KW-0862">Zinc</keyword>
<dbReference type="EC" id="6.5.1.2" evidence="1"/>
<dbReference type="EMBL" id="AE017180">
    <property type="protein sequence ID" value="AAR34220.1"/>
    <property type="molecule type" value="Genomic_DNA"/>
</dbReference>
<dbReference type="RefSeq" id="NP_951947.1">
    <property type="nucleotide sequence ID" value="NC_002939.5"/>
</dbReference>
<dbReference type="RefSeq" id="WP_010941554.1">
    <property type="nucleotide sequence ID" value="NC_002939.5"/>
</dbReference>
<dbReference type="SMR" id="Q74ER9"/>
<dbReference type="FunCoup" id="Q74ER9">
    <property type="interactions" value="466"/>
</dbReference>
<dbReference type="STRING" id="243231.GSU0890"/>
<dbReference type="EnsemblBacteria" id="AAR34220">
    <property type="protein sequence ID" value="AAR34220"/>
    <property type="gene ID" value="GSU0890"/>
</dbReference>
<dbReference type="KEGG" id="gsu:GSU0890"/>
<dbReference type="PATRIC" id="fig|243231.5.peg.888"/>
<dbReference type="eggNOG" id="COG0272">
    <property type="taxonomic scope" value="Bacteria"/>
</dbReference>
<dbReference type="HOGENOM" id="CLU_007764_2_1_7"/>
<dbReference type="InParanoid" id="Q74ER9"/>
<dbReference type="OrthoDB" id="9759736at2"/>
<dbReference type="Proteomes" id="UP000000577">
    <property type="component" value="Chromosome"/>
</dbReference>
<dbReference type="GO" id="GO:0005829">
    <property type="term" value="C:cytosol"/>
    <property type="evidence" value="ECO:0000318"/>
    <property type="project" value="GO_Central"/>
</dbReference>
<dbReference type="GO" id="GO:0003677">
    <property type="term" value="F:DNA binding"/>
    <property type="evidence" value="ECO:0007669"/>
    <property type="project" value="InterPro"/>
</dbReference>
<dbReference type="GO" id="GO:0003911">
    <property type="term" value="F:DNA ligase (NAD+) activity"/>
    <property type="evidence" value="ECO:0000318"/>
    <property type="project" value="GO_Central"/>
</dbReference>
<dbReference type="GO" id="GO:0046872">
    <property type="term" value="F:metal ion binding"/>
    <property type="evidence" value="ECO:0007669"/>
    <property type="project" value="UniProtKB-KW"/>
</dbReference>
<dbReference type="GO" id="GO:0006281">
    <property type="term" value="P:DNA repair"/>
    <property type="evidence" value="ECO:0007669"/>
    <property type="project" value="UniProtKB-KW"/>
</dbReference>
<dbReference type="GO" id="GO:0006260">
    <property type="term" value="P:DNA replication"/>
    <property type="evidence" value="ECO:0007669"/>
    <property type="project" value="UniProtKB-KW"/>
</dbReference>
<dbReference type="CDD" id="cd17748">
    <property type="entry name" value="BRCT_DNA_ligase_like"/>
    <property type="match status" value="1"/>
</dbReference>
<dbReference type="CDD" id="cd00114">
    <property type="entry name" value="LIGANc"/>
    <property type="match status" value="1"/>
</dbReference>
<dbReference type="FunFam" id="1.10.150.20:FF:000006">
    <property type="entry name" value="DNA ligase"/>
    <property type="match status" value="1"/>
</dbReference>
<dbReference type="FunFam" id="1.10.150.20:FF:000007">
    <property type="entry name" value="DNA ligase"/>
    <property type="match status" value="1"/>
</dbReference>
<dbReference type="FunFam" id="1.10.287.610:FF:000002">
    <property type="entry name" value="DNA ligase"/>
    <property type="match status" value="1"/>
</dbReference>
<dbReference type="FunFam" id="2.40.50.140:FF:000012">
    <property type="entry name" value="DNA ligase"/>
    <property type="match status" value="1"/>
</dbReference>
<dbReference type="FunFam" id="3.30.470.30:FF:000001">
    <property type="entry name" value="DNA ligase"/>
    <property type="match status" value="1"/>
</dbReference>
<dbReference type="Gene3D" id="6.20.10.30">
    <property type="match status" value="1"/>
</dbReference>
<dbReference type="Gene3D" id="1.10.150.20">
    <property type="entry name" value="5' to 3' exonuclease, C-terminal subdomain"/>
    <property type="match status" value="2"/>
</dbReference>
<dbReference type="Gene3D" id="3.40.50.10190">
    <property type="entry name" value="BRCT domain"/>
    <property type="match status" value="1"/>
</dbReference>
<dbReference type="Gene3D" id="3.30.470.30">
    <property type="entry name" value="DNA ligase/mRNA capping enzyme"/>
    <property type="match status" value="1"/>
</dbReference>
<dbReference type="Gene3D" id="1.10.287.610">
    <property type="entry name" value="Helix hairpin bin"/>
    <property type="match status" value="1"/>
</dbReference>
<dbReference type="Gene3D" id="2.40.50.140">
    <property type="entry name" value="Nucleic acid-binding proteins"/>
    <property type="match status" value="1"/>
</dbReference>
<dbReference type="HAMAP" id="MF_01588">
    <property type="entry name" value="DNA_ligase_A"/>
    <property type="match status" value="1"/>
</dbReference>
<dbReference type="InterPro" id="IPR001357">
    <property type="entry name" value="BRCT_dom"/>
</dbReference>
<dbReference type="InterPro" id="IPR036420">
    <property type="entry name" value="BRCT_dom_sf"/>
</dbReference>
<dbReference type="InterPro" id="IPR041663">
    <property type="entry name" value="DisA/LigA_HHH"/>
</dbReference>
<dbReference type="InterPro" id="IPR001679">
    <property type="entry name" value="DNA_ligase"/>
</dbReference>
<dbReference type="InterPro" id="IPR018239">
    <property type="entry name" value="DNA_ligase_AS"/>
</dbReference>
<dbReference type="InterPro" id="IPR033136">
    <property type="entry name" value="DNA_ligase_CS"/>
</dbReference>
<dbReference type="InterPro" id="IPR013839">
    <property type="entry name" value="DNAligase_adenylation"/>
</dbReference>
<dbReference type="InterPro" id="IPR013840">
    <property type="entry name" value="DNAligase_N"/>
</dbReference>
<dbReference type="InterPro" id="IPR003583">
    <property type="entry name" value="Hlx-hairpin-Hlx_DNA-bd_motif"/>
</dbReference>
<dbReference type="InterPro" id="IPR012340">
    <property type="entry name" value="NA-bd_OB-fold"/>
</dbReference>
<dbReference type="InterPro" id="IPR004150">
    <property type="entry name" value="NAD_DNA_ligase_OB"/>
</dbReference>
<dbReference type="InterPro" id="IPR010994">
    <property type="entry name" value="RuvA_2-like"/>
</dbReference>
<dbReference type="InterPro" id="IPR004149">
    <property type="entry name" value="Znf_DNAligase_C4"/>
</dbReference>
<dbReference type="NCBIfam" id="TIGR00575">
    <property type="entry name" value="dnlj"/>
    <property type="match status" value="1"/>
</dbReference>
<dbReference type="NCBIfam" id="NF005932">
    <property type="entry name" value="PRK07956.1"/>
    <property type="match status" value="1"/>
</dbReference>
<dbReference type="PANTHER" id="PTHR23389">
    <property type="entry name" value="CHROMOSOME TRANSMISSION FIDELITY FACTOR 18"/>
    <property type="match status" value="1"/>
</dbReference>
<dbReference type="PANTHER" id="PTHR23389:SF9">
    <property type="entry name" value="DNA LIGASE"/>
    <property type="match status" value="1"/>
</dbReference>
<dbReference type="Pfam" id="PF00533">
    <property type="entry name" value="BRCT"/>
    <property type="match status" value="1"/>
</dbReference>
<dbReference type="Pfam" id="PF01653">
    <property type="entry name" value="DNA_ligase_aden"/>
    <property type="match status" value="1"/>
</dbReference>
<dbReference type="Pfam" id="PF03120">
    <property type="entry name" value="DNA_ligase_OB"/>
    <property type="match status" value="1"/>
</dbReference>
<dbReference type="Pfam" id="PF03119">
    <property type="entry name" value="DNA_ligase_ZBD"/>
    <property type="match status" value="1"/>
</dbReference>
<dbReference type="Pfam" id="PF12826">
    <property type="entry name" value="HHH_2"/>
    <property type="match status" value="1"/>
</dbReference>
<dbReference type="Pfam" id="PF14520">
    <property type="entry name" value="HHH_5"/>
    <property type="match status" value="1"/>
</dbReference>
<dbReference type="Pfam" id="PF22745">
    <property type="entry name" value="Nlig-Ia"/>
    <property type="match status" value="1"/>
</dbReference>
<dbReference type="PIRSF" id="PIRSF001604">
    <property type="entry name" value="LigA"/>
    <property type="match status" value="1"/>
</dbReference>
<dbReference type="SMART" id="SM00292">
    <property type="entry name" value="BRCT"/>
    <property type="match status" value="1"/>
</dbReference>
<dbReference type="SMART" id="SM00278">
    <property type="entry name" value="HhH1"/>
    <property type="match status" value="4"/>
</dbReference>
<dbReference type="SMART" id="SM00532">
    <property type="entry name" value="LIGANc"/>
    <property type="match status" value="1"/>
</dbReference>
<dbReference type="SUPFAM" id="SSF52113">
    <property type="entry name" value="BRCT domain"/>
    <property type="match status" value="1"/>
</dbReference>
<dbReference type="SUPFAM" id="SSF56091">
    <property type="entry name" value="DNA ligase/mRNA capping enzyme, catalytic domain"/>
    <property type="match status" value="1"/>
</dbReference>
<dbReference type="SUPFAM" id="SSF50249">
    <property type="entry name" value="Nucleic acid-binding proteins"/>
    <property type="match status" value="1"/>
</dbReference>
<dbReference type="SUPFAM" id="SSF47781">
    <property type="entry name" value="RuvA domain 2-like"/>
    <property type="match status" value="1"/>
</dbReference>
<dbReference type="PROSITE" id="PS50172">
    <property type="entry name" value="BRCT"/>
    <property type="match status" value="1"/>
</dbReference>
<dbReference type="PROSITE" id="PS01055">
    <property type="entry name" value="DNA_LIGASE_N1"/>
    <property type="match status" value="1"/>
</dbReference>
<dbReference type="PROSITE" id="PS01056">
    <property type="entry name" value="DNA_LIGASE_N2"/>
    <property type="match status" value="1"/>
</dbReference>
<feature type="chain" id="PRO_0000313250" description="DNA ligase">
    <location>
        <begin position="1"/>
        <end position="670"/>
    </location>
</feature>
<feature type="domain" description="BRCT" evidence="1">
    <location>
        <begin position="591"/>
        <end position="670"/>
    </location>
</feature>
<feature type="active site" description="N6-AMP-lysine intermediate" evidence="1">
    <location>
        <position position="119"/>
    </location>
</feature>
<feature type="binding site" evidence="1">
    <location>
        <begin position="34"/>
        <end position="38"/>
    </location>
    <ligand>
        <name>NAD(+)</name>
        <dbReference type="ChEBI" id="CHEBI:57540"/>
    </ligand>
</feature>
<feature type="binding site" evidence="1">
    <location>
        <begin position="83"/>
        <end position="84"/>
    </location>
    <ligand>
        <name>NAD(+)</name>
        <dbReference type="ChEBI" id="CHEBI:57540"/>
    </ligand>
</feature>
<feature type="binding site" evidence="1">
    <location>
        <position position="117"/>
    </location>
    <ligand>
        <name>NAD(+)</name>
        <dbReference type="ChEBI" id="CHEBI:57540"/>
    </ligand>
</feature>
<feature type="binding site" evidence="1">
    <location>
        <position position="140"/>
    </location>
    <ligand>
        <name>NAD(+)</name>
        <dbReference type="ChEBI" id="CHEBI:57540"/>
    </ligand>
</feature>
<feature type="binding site" evidence="1">
    <location>
        <position position="177"/>
    </location>
    <ligand>
        <name>NAD(+)</name>
        <dbReference type="ChEBI" id="CHEBI:57540"/>
    </ligand>
</feature>
<feature type="binding site" evidence="1">
    <location>
        <position position="293"/>
    </location>
    <ligand>
        <name>NAD(+)</name>
        <dbReference type="ChEBI" id="CHEBI:57540"/>
    </ligand>
</feature>
<feature type="binding site" evidence="1">
    <location>
        <position position="317"/>
    </location>
    <ligand>
        <name>NAD(+)</name>
        <dbReference type="ChEBI" id="CHEBI:57540"/>
    </ligand>
</feature>
<feature type="binding site" evidence="1">
    <location>
        <position position="411"/>
    </location>
    <ligand>
        <name>Zn(2+)</name>
        <dbReference type="ChEBI" id="CHEBI:29105"/>
    </ligand>
</feature>
<feature type="binding site" evidence="1">
    <location>
        <position position="414"/>
    </location>
    <ligand>
        <name>Zn(2+)</name>
        <dbReference type="ChEBI" id="CHEBI:29105"/>
    </ligand>
</feature>
<feature type="binding site" evidence="1">
    <location>
        <position position="429"/>
    </location>
    <ligand>
        <name>Zn(2+)</name>
        <dbReference type="ChEBI" id="CHEBI:29105"/>
    </ligand>
</feature>
<feature type="binding site" evidence="1">
    <location>
        <position position="434"/>
    </location>
    <ligand>
        <name>Zn(2+)</name>
        <dbReference type="ChEBI" id="CHEBI:29105"/>
    </ligand>
</feature>
<organism>
    <name type="scientific">Geobacter sulfurreducens (strain ATCC 51573 / DSM 12127 / PCA)</name>
    <dbReference type="NCBI Taxonomy" id="243231"/>
    <lineage>
        <taxon>Bacteria</taxon>
        <taxon>Pseudomonadati</taxon>
        <taxon>Thermodesulfobacteriota</taxon>
        <taxon>Desulfuromonadia</taxon>
        <taxon>Geobacterales</taxon>
        <taxon>Geobacteraceae</taxon>
        <taxon>Geobacter</taxon>
    </lineage>
</organism>
<evidence type="ECO:0000255" key="1">
    <source>
        <dbReference type="HAMAP-Rule" id="MF_01588"/>
    </source>
</evidence>
<sequence>MDKQTAADRVAALRTELERHNRLYYAEDRPEITDAEYDLLFRELVDLETRFPDLAAPDSPTQRVGGAPLDKFEQVTHRIPMLSLENAFTDVEIADFDDRVKRFLGLHGDVEIDYVCEPKMDGLAVELVYERGILTVGSTRGDGVVGENVTHNLKTVRGIPLRLRCEQPPELLEVRGEVYLPLAAFQRLNAQREEEGEPPFANPRNAAAGSIRQLDSRITARRPLAIFCYAPGEVRGASFAAQTEFLDRIGEWGLPVNPLIRPVKGVAEILAYYREMTERRDSLPYEIDGVVVKVDSFALQRELGEKSRSPRWAVAVKFPPRQAVTVVEDIVPSVGRTGVITPTANLRPVEVSGVTVSRATLHNWEEMERKDIRIGDTVVIERAGDVIPAVVKVLTEKRSGSERPLPIPAVCPECGSEVVKIPDEVAVRCMGLSCPAQIRESIIHFASRDAMDMEGLGEKYIEQLLRLGLVKNVADLYTLTKDQFMQFDRMGDKLAENLLNAIEASKQRELSRFIFALGIRHVGEHTAKLLAGAFGSIENLERATEEELLSIREVGPQVARSIITFFRNEGNRETIRRMFKAGVRPTAEEKKVGGRFTGKTFVFTGALTRFSRPEAQKMVEKEGGHAAGSVSKKTDYVVAGAEAGSKLDKARQLGVRVLTEDEFLAMLEEG</sequence>
<reference key="1">
    <citation type="journal article" date="2003" name="Science">
        <title>Genome of Geobacter sulfurreducens: metal reduction in subsurface environments.</title>
        <authorList>
            <person name="Methe B.A."/>
            <person name="Nelson K.E."/>
            <person name="Eisen J.A."/>
            <person name="Paulsen I.T."/>
            <person name="Nelson W.C."/>
            <person name="Heidelberg J.F."/>
            <person name="Wu D."/>
            <person name="Wu M."/>
            <person name="Ward N.L."/>
            <person name="Beanan M.J."/>
            <person name="Dodson R.J."/>
            <person name="Madupu R."/>
            <person name="Brinkac L.M."/>
            <person name="Daugherty S.C."/>
            <person name="DeBoy R.T."/>
            <person name="Durkin A.S."/>
            <person name="Gwinn M.L."/>
            <person name="Kolonay J.F."/>
            <person name="Sullivan S.A."/>
            <person name="Haft D.H."/>
            <person name="Selengut J."/>
            <person name="Davidsen T.M."/>
            <person name="Zafar N."/>
            <person name="White O."/>
            <person name="Tran B."/>
            <person name="Romero C."/>
            <person name="Forberger H.A."/>
            <person name="Weidman J.F."/>
            <person name="Khouri H.M."/>
            <person name="Feldblyum T.V."/>
            <person name="Utterback T.R."/>
            <person name="Van Aken S.E."/>
            <person name="Lovley D.R."/>
            <person name="Fraser C.M."/>
        </authorList>
    </citation>
    <scope>NUCLEOTIDE SEQUENCE [LARGE SCALE GENOMIC DNA]</scope>
    <source>
        <strain>ATCC 51573 / DSM 12127 / PCA</strain>
    </source>
</reference>
<gene>
    <name evidence="1" type="primary">ligA</name>
    <name type="ordered locus">GSU0890</name>
</gene>
<comment type="function">
    <text evidence="1">DNA ligase that catalyzes the formation of phosphodiester linkages between 5'-phosphoryl and 3'-hydroxyl groups in double-stranded DNA using NAD as a coenzyme and as the energy source for the reaction. It is essential for DNA replication and repair of damaged DNA.</text>
</comment>
<comment type="catalytic activity">
    <reaction evidence="1">
        <text>NAD(+) + (deoxyribonucleotide)n-3'-hydroxyl + 5'-phospho-(deoxyribonucleotide)m = (deoxyribonucleotide)n+m + AMP + beta-nicotinamide D-nucleotide.</text>
        <dbReference type="EC" id="6.5.1.2"/>
    </reaction>
</comment>
<comment type="cofactor">
    <cofactor evidence="1">
        <name>Mg(2+)</name>
        <dbReference type="ChEBI" id="CHEBI:18420"/>
    </cofactor>
    <cofactor evidence="1">
        <name>Mn(2+)</name>
        <dbReference type="ChEBI" id="CHEBI:29035"/>
    </cofactor>
</comment>
<comment type="similarity">
    <text evidence="1">Belongs to the NAD-dependent DNA ligase family. LigA subfamily.</text>
</comment>
<name>DNLJ_GEOSL</name>